<organism>
    <name type="scientific">Roseobacter denitrificans (strain ATCC 33942 / OCh 114)</name>
    <name type="common">Erythrobacter sp. (strain OCh 114)</name>
    <name type="synonym">Roseobacter denitrificans</name>
    <dbReference type="NCBI Taxonomy" id="375451"/>
    <lineage>
        <taxon>Bacteria</taxon>
        <taxon>Pseudomonadati</taxon>
        <taxon>Pseudomonadota</taxon>
        <taxon>Alphaproteobacteria</taxon>
        <taxon>Rhodobacterales</taxon>
        <taxon>Roseobacteraceae</taxon>
        <taxon>Roseobacter</taxon>
    </lineage>
</organism>
<proteinExistence type="inferred from homology"/>
<keyword id="KW-0067">ATP-binding</keyword>
<keyword id="KW-0436">Ligase</keyword>
<keyword id="KW-0547">Nucleotide-binding</keyword>
<keyword id="KW-0648">Protein biosynthesis</keyword>
<keyword id="KW-1185">Reference proteome</keyword>
<comment type="function">
    <text evidence="1">Allows the formation of correctly charged Gln-tRNA(Gln) through the transamidation of misacylated Glu-tRNA(Gln) in organisms which lack glutaminyl-tRNA synthetase. The reaction takes place in the presence of glutamine and ATP through an activated gamma-phospho-Glu-tRNA(Gln).</text>
</comment>
<comment type="catalytic activity">
    <reaction evidence="1">
        <text>L-glutamyl-tRNA(Gln) + L-glutamine + ATP + H2O = L-glutaminyl-tRNA(Gln) + L-glutamate + ADP + phosphate + H(+)</text>
        <dbReference type="Rhea" id="RHEA:17521"/>
        <dbReference type="Rhea" id="RHEA-COMP:9681"/>
        <dbReference type="Rhea" id="RHEA-COMP:9684"/>
        <dbReference type="ChEBI" id="CHEBI:15377"/>
        <dbReference type="ChEBI" id="CHEBI:15378"/>
        <dbReference type="ChEBI" id="CHEBI:29985"/>
        <dbReference type="ChEBI" id="CHEBI:30616"/>
        <dbReference type="ChEBI" id="CHEBI:43474"/>
        <dbReference type="ChEBI" id="CHEBI:58359"/>
        <dbReference type="ChEBI" id="CHEBI:78520"/>
        <dbReference type="ChEBI" id="CHEBI:78521"/>
        <dbReference type="ChEBI" id="CHEBI:456216"/>
        <dbReference type="EC" id="6.3.5.7"/>
    </reaction>
</comment>
<comment type="subunit">
    <text evidence="1">Heterotrimer of A, B and C subunits.</text>
</comment>
<comment type="similarity">
    <text evidence="1">Belongs to the amidase family. GatA subfamily.</text>
</comment>
<feature type="chain" id="PRO_1000015901" description="Glutamyl-tRNA(Gln) amidotransferase subunit A">
    <location>
        <begin position="1"/>
        <end position="495"/>
    </location>
</feature>
<feature type="active site" description="Charge relay system" evidence="1">
    <location>
        <position position="78"/>
    </location>
</feature>
<feature type="active site" description="Charge relay system" evidence="1">
    <location>
        <position position="158"/>
    </location>
</feature>
<feature type="active site" description="Acyl-ester intermediate" evidence="1">
    <location>
        <position position="182"/>
    </location>
</feature>
<reference key="1">
    <citation type="journal article" date="2007" name="J. Bacteriol.">
        <title>The complete genome sequence of Roseobacter denitrificans reveals a mixotrophic rather than photosynthetic metabolism.</title>
        <authorList>
            <person name="Swingley W.D."/>
            <person name="Sadekar S."/>
            <person name="Mastrian S.D."/>
            <person name="Matthies H.J."/>
            <person name="Hao J."/>
            <person name="Ramos H."/>
            <person name="Acharya C.R."/>
            <person name="Conrad A.L."/>
            <person name="Taylor H.L."/>
            <person name="Dejesa L.C."/>
            <person name="Shah M.K."/>
            <person name="O'Huallachain M.E."/>
            <person name="Lince M.T."/>
            <person name="Blankenship R.E."/>
            <person name="Beatty J.T."/>
            <person name="Touchman J.W."/>
        </authorList>
    </citation>
    <scope>NUCLEOTIDE SEQUENCE [LARGE SCALE GENOMIC DNA]</scope>
    <source>
        <strain>ATCC 33942 / OCh 114</strain>
    </source>
</reference>
<dbReference type="EC" id="6.3.5.7" evidence="1"/>
<dbReference type="EMBL" id="CP000362">
    <property type="protein sequence ID" value="ABG31604.1"/>
    <property type="molecule type" value="Genomic_DNA"/>
</dbReference>
<dbReference type="RefSeq" id="WP_011568221.1">
    <property type="nucleotide sequence ID" value="NC_008209.1"/>
</dbReference>
<dbReference type="SMR" id="Q168I9"/>
<dbReference type="STRING" id="375451.RD1_2000"/>
<dbReference type="KEGG" id="rde:RD1_2000"/>
<dbReference type="eggNOG" id="COG0154">
    <property type="taxonomic scope" value="Bacteria"/>
</dbReference>
<dbReference type="HOGENOM" id="CLU_009600_0_3_5"/>
<dbReference type="OrthoDB" id="9811471at2"/>
<dbReference type="Proteomes" id="UP000007029">
    <property type="component" value="Chromosome"/>
</dbReference>
<dbReference type="GO" id="GO:0030956">
    <property type="term" value="C:glutamyl-tRNA(Gln) amidotransferase complex"/>
    <property type="evidence" value="ECO:0007669"/>
    <property type="project" value="InterPro"/>
</dbReference>
<dbReference type="GO" id="GO:0005524">
    <property type="term" value="F:ATP binding"/>
    <property type="evidence" value="ECO:0007669"/>
    <property type="project" value="UniProtKB-KW"/>
</dbReference>
<dbReference type="GO" id="GO:0050567">
    <property type="term" value="F:glutaminyl-tRNA synthase (glutamine-hydrolyzing) activity"/>
    <property type="evidence" value="ECO:0007669"/>
    <property type="project" value="UniProtKB-UniRule"/>
</dbReference>
<dbReference type="GO" id="GO:0006412">
    <property type="term" value="P:translation"/>
    <property type="evidence" value="ECO:0007669"/>
    <property type="project" value="UniProtKB-UniRule"/>
</dbReference>
<dbReference type="Gene3D" id="3.90.1300.10">
    <property type="entry name" value="Amidase signature (AS) domain"/>
    <property type="match status" value="1"/>
</dbReference>
<dbReference type="HAMAP" id="MF_00120">
    <property type="entry name" value="GatA"/>
    <property type="match status" value="1"/>
</dbReference>
<dbReference type="InterPro" id="IPR000120">
    <property type="entry name" value="Amidase"/>
</dbReference>
<dbReference type="InterPro" id="IPR020556">
    <property type="entry name" value="Amidase_CS"/>
</dbReference>
<dbReference type="InterPro" id="IPR023631">
    <property type="entry name" value="Amidase_dom"/>
</dbReference>
<dbReference type="InterPro" id="IPR036928">
    <property type="entry name" value="AS_sf"/>
</dbReference>
<dbReference type="InterPro" id="IPR004412">
    <property type="entry name" value="GatA"/>
</dbReference>
<dbReference type="NCBIfam" id="TIGR00132">
    <property type="entry name" value="gatA"/>
    <property type="match status" value="1"/>
</dbReference>
<dbReference type="PANTHER" id="PTHR11895:SF151">
    <property type="entry name" value="GLUTAMYL-TRNA(GLN) AMIDOTRANSFERASE SUBUNIT A"/>
    <property type="match status" value="1"/>
</dbReference>
<dbReference type="PANTHER" id="PTHR11895">
    <property type="entry name" value="TRANSAMIDASE"/>
    <property type="match status" value="1"/>
</dbReference>
<dbReference type="Pfam" id="PF01425">
    <property type="entry name" value="Amidase"/>
    <property type="match status" value="1"/>
</dbReference>
<dbReference type="SUPFAM" id="SSF75304">
    <property type="entry name" value="Amidase signature (AS) enzymes"/>
    <property type="match status" value="1"/>
</dbReference>
<dbReference type="PROSITE" id="PS00571">
    <property type="entry name" value="AMIDASES"/>
    <property type="match status" value="1"/>
</dbReference>
<evidence type="ECO:0000255" key="1">
    <source>
        <dbReference type="HAMAP-Rule" id="MF_00120"/>
    </source>
</evidence>
<name>GATA_ROSDO</name>
<gene>
    <name evidence="1" type="primary">gatA</name>
    <name type="ordered locus">RD1_2000</name>
</gene>
<protein>
    <recommendedName>
        <fullName evidence="1">Glutamyl-tRNA(Gln) amidotransferase subunit A</fullName>
        <shortName evidence="1">Glu-ADT subunit A</shortName>
        <ecNumber evidence="1">6.3.5.7</ecNumber>
    </recommendedName>
</protein>
<accession>Q168I9</accession>
<sequence length="495" mass="52423">MSKLNELGLAEARDALRAGETTSKDLTEACLTAIEEAGVLNAFVHHTADLALERAAAADARLAQGAAPAMCGLPIGMKDLFCTKGVASQAGSRILEGFLPEYESTVSQNLVDAGAVMLGKLNMDEFAMGSSNETSIYGDVINPWRRKDDEKPLTPGGSSGGSAAAVAADLCLAATGTDTGGSIRQPAAFTGTVGIKPTYGRCSRWGIVAFASSLDQAGPMTKSVRDAAIMLEAMSGHDPKDSTSADLAVPDFEAALSGDIRGKKIGIPKEYRMDGMPDEIEALWQTGIAMMKDAGAEIIDISLPHTKYALPAYYVIAPAEASSNLARYDGVRYGHRAKLDQGDGITEMYEKTRAEGFGPEVQRRVMVGTYVLSAGFYDAYYNRARKVRTLIKQDFETVFAQGVDAILTPATPSAAFGLGEMTDADPVAMYLNDIFTVTVNLAGLPGIAVPGGLDANGLPLGLQLIGRPWEEAELLNTAYALEQAVGFVAKPQKWW</sequence>